<gene>
    <name evidence="1" type="primary">flgI</name>
    <name type="ordered locus">Smed_0260</name>
</gene>
<feature type="signal peptide" evidence="1">
    <location>
        <begin position="1"/>
        <end position="25"/>
    </location>
</feature>
<feature type="chain" id="PRO_5000257212" description="Flagellar P-ring protein">
    <location>
        <begin position="26"/>
        <end position="371"/>
    </location>
</feature>
<reference key="1">
    <citation type="submission" date="2007-06" db="EMBL/GenBank/DDBJ databases">
        <title>Complete sequence of Sinorhizobium medicae WSM419 chromosome.</title>
        <authorList>
            <consortium name="US DOE Joint Genome Institute"/>
            <person name="Copeland A."/>
            <person name="Lucas S."/>
            <person name="Lapidus A."/>
            <person name="Barry K."/>
            <person name="Glavina del Rio T."/>
            <person name="Dalin E."/>
            <person name="Tice H."/>
            <person name="Pitluck S."/>
            <person name="Chain P."/>
            <person name="Malfatti S."/>
            <person name="Shin M."/>
            <person name="Vergez L."/>
            <person name="Schmutz J."/>
            <person name="Larimer F."/>
            <person name="Land M."/>
            <person name="Hauser L."/>
            <person name="Kyrpides N."/>
            <person name="Mikhailova N."/>
            <person name="Reeve W.G."/>
            <person name="Richardson P."/>
        </authorList>
    </citation>
    <scope>NUCLEOTIDE SEQUENCE [LARGE SCALE GENOMIC DNA]</scope>
    <source>
        <strain>WSM419</strain>
    </source>
</reference>
<proteinExistence type="inferred from homology"/>
<keyword id="KW-0975">Bacterial flagellum</keyword>
<keyword id="KW-0574">Periplasm</keyword>
<keyword id="KW-0732">Signal</keyword>
<comment type="function">
    <text evidence="1">Assembles around the rod to form the L-ring and probably protects the motor/basal body from shearing forces during rotation.</text>
</comment>
<comment type="subunit">
    <text evidence="1">The basal body constitutes a major portion of the flagellar organelle and consists of four rings (L,P,S, and M) mounted on a central rod.</text>
</comment>
<comment type="subcellular location">
    <subcellularLocation>
        <location evidence="1">Periplasm</location>
    </subcellularLocation>
    <subcellularLocation>
        <location evidence="1">Bacterial flagellum basal body</location>
    </subcellularLocation>
</comment>
<comment type="similarity">
    <text evidence="1">Belongs to the FlgI family.</text>
</comment>
<protein>
    <recommendedName>
        <fullName evidence="1">Flagellar P-ring protein</fullName>
    </recommendedName>
    <alternativeName>
        <fullName evidence="1">Basal body P-ring protein</fullName>
    </alternativeName>
</protein>
<name>FLGI_SINMW</name>
<accession>A6U639</accession>
<dbReference type="EMBL" id="CP000738">
    <property type="protein sequence ID" value="ABR59119.1"/>
    <property type="molecule type" value="Genomic_DNA"/>
</dbReference>
<dbReference type="RefSeq" id="WP_011974470.1">
    <property type="nucleotide sequence ID" value="NC_009636.1"/>
</dbReference>
<dbReference type="RefSeq" id="YP_001325954.1">
    <property type="nucleotide sequence ID" value="NC_009636.1"/>
</dbReference>
<dbReference type="SMR" id="A6U639"/>
<dbReference type="STRING" id="366394.Smed_0260"/>
<dbReference type="KEGG" id="smd:Smed_0260"/>
<dbReference type="PATRIC" id="fig|366394.8.peg.3326"/>
<dbReference type="eggNOG" id="COG1706">
    <property type="taxonomic scope" value="Bacteria"/>
</dbReference>
<dbReference type="HOGENOM" id="CLU_045235_1_0_5"/>
<dbReference type="OrthoDB" id="9786431at2"/>
<dbReference type="Proteomes" id="UP000001108">
    <property type="component" value="Chromosome"/>
</dbReference>
<dbReference type="GO" id="GO:0009428">
    <property type="term" value="C:bacterial-type flagellum basal body, distal rod, P ring"/>
    <property type="evidence" value="ECO:0007669"/>
    <property type="project" value="InterPro"/>
</dbReference>
<dbReference type="GO" id="GO:0030288">
    <property type="term" value="C:outer membrane-bounded periplasmic space"/>
    <property type="evidence" value="ECO:0007669"/>
    <property type="project" value="InterPro"/>
</dbReference>
<dbReference type="GO" id="GO:0005198">
    <property type="term" value="F:structural molecule activity"/>
    <property type="evidence" value="ECO:0007669"/>
    <property type="project" value="InterPro"/>
</dbReference>
<dbReference type="GO" id="GO:0071973">
    <property type="term" value="P:bacterial-type flagellum-dependent cell motility"/>
    <property type="evidence" value="ECO:0007669"/>
    <property type="project" value="InterPro"/>
</dbReference>
<dbReference type="HAMAP" id="MF_00416">
    <property type="entry name" value="FlgI"/>
    <property type="match status" value="1"/>
</dbReference>
<dbReference type="InterPro" id="IPR001782">
    <property type="entry name" value="Flag_FlgI"/>
</dbReference>
<dbReference type="NCBIfam" id="NF003676">
    <property type="entry name" value="PRK05303.1"/>
    <property type="match status" value="1"/>
</dbReference>
<dbReference type="PANTHER" id="PTHR30381">
    <property type="entry name" value="FLAGELLAR P-RING PERIPLASMIC PROTEIN FLGI"/>
    <property type="match status" value="1"/>
</dbReference>
<dbReference type="PANTHER" id="PTHR30381:SF0">
    <property type="entry name" value="FLAGELLAR P-RING PROTEIN"/>
    <property type="match status" value="1"/>
</dbReference>
<dbReference type="Pfam" id="PF02119">
    <property type="entry name" value="FlgI"/>
    <property type="match status" value="1"/>
</dbReference>
<dbReference type="PRINTS" id="PR01010">
    <property type="entry name" value="FLGPRINGFLGI"/>
</dbReference>
<sequence length="371" mass="38415">MKMRACKWLLTLAVAFAATLSSAYAASRIKDVASLQAGRDNQLIGYGLVVGLQGTGDSLRSSPFTDQSIRAMLQNLGISTQGGDSRTRNVAAVLVTATLPPFASPGSRLDVTVGSLGDATSLRGGTLVMTSLSGADGQIYAVAQGSVVVSGFNAQGEAAQLNQGVTTAGRVPNGAIIERELPSKFKDGFNLVLQLRNPDFSTAVGMAAAINRYAAAQFGGRIAEALDSQSVLVQKPKMADLARLMADVENLVIETDAPARVVINERTGTIVIGQDVRVAQVAVSYGTLTVQVSETPTIVQPEPFSRGQTAYEPNTTIEAQSDGGTVAILNGSSLRSLVAGLNSIGVKPDGIIAILQSIKSAGALQAELVLQ</sequence>
<organism>
    <name type="scientific">Sinorhizobium medicae (strain WSM419)</name>
    <name type="common">Ensifer medicae</name>
    <dbReference type="NCBI Taxonomy" id="366394"/>
    <lineage>
        <taxon>Bacteria</taxon>
        <taxon>Pseudomonadati</taxon>
        <taxon>Pseudomonadota</taxon>
        <taxon>Alphaproteobacteria</taxon>
        <taxon>Hyphomicrobiales</taxon>
        <taxon>Rhizobiaceae</taxon>
        <taxon>Sinorhizobium/Ensifer group</taxon>
        <taxon>Sinorhizobium</taxon>
    </lineage>
</organism>
<evidence type="ECO:0000255" key="1">
    <source>
        <dbReference type="HAMAP-Rule" id="MF_00416"/>
    </source>
</evidence>